<gene>
    <name evidence="1" type="primary">minE</name>
    <name type="ordered locus">Rcas_3408</name>
</gene>
<sequence length="87" mass="9821">MSFLDSLFGKRQRSSDIARDRLLTVLVHDRVKLTPDMMEQLKAELSTVIARYVPSVDAGAIEVTLMRGEAVDHLKADIPLRRTSQKL</sequence>
<comment type="function">
    <text evidence="1">Prevents the cell division inhibition by proteins MinC and MinD at internal division sites while permitting inhibition at polar sites. This ensures cell division at the proper site by restricting the formation of a division septum at the midpoint of the long axis of the cell.</text>
</comment>
<comment type="similarity">
    <text evidence="1">Belongs to the MinE family.</text>
</comment>
<evidence type="ECO:0000255" key="1">
    <source>
        <dbReference type="HAMAP-Rule" id="MF_00262"/>
    </source>
</evidence>
<proteinExistence type="inferred from homology"/>
<organism>
    <name type="scientific">Roseiflexus castenholzii (strain DSM 13941 / HLO8)</name>
    <dbReference type="NCBI Taxonomy" id="383372"/>
    <lineage>
        <taxon>Bacteria</taxon>
        <taxon>Bacillati</taxon>
        <taxon>Chloroflexota</taxon>
        <taxon>Chloroflexia</taxon>
        <taxon>Chloroflexales</taxon>
        <taxon>Roseiflexineae</taxon>
        <taxon>Roseiflexaceae</taxon>
        <taxon>Roseiflexus</taxon>
    </lineage>
</organism>
<name>MINE_ROSCS</name>
<dbReference type="EMBL" id="CP000804">
    <property type="protein sequence ID" value="ABU59458.1"/>
    <property type="molecule type" value="Genomic_DNA"/>
</dbReference>
<dbReference type="RefSeq" id="WP_012121882.1">
    <property type="nucleotide sequence ID" value="NC_009767.1"/>
</dbReference>
<dbReference type="SMR" id="A7NPG2"/>
<dbReference type="STRING" id="383372.Rcas_3408"/>
<dbReference type="KEGG" id="rca:Rcas_3408"/>
<dbReference type="eggNOG" id="COG0851">
    <property type="taxonomic scope" value="Bacteria"/>
</dbReference>
<dbReference type="HOGENOM" id="CLU_137929_1_1_0"/>
<dbReference type="OrthoDB" id="9796578at2"/>
<dbReference type="Proteomes" id="UP000000263">
    <property type="component" value="Chromosome"/>
</dbReference>
<dbReference type="GO" id="GO:0051301">
    <property type="term" value="P:cell division"/>
    <property type="evidence" value="ECO:0007669"/>
    <property type="project" value="UniProtKB-KW"/>
</dbReference>
<dbReference type="GO" id="GO:0032955">
    <property type="term" value="P:regulation of division septum assembly"/>
    <property type="evidence" value="ECO:0007669"/>
    <property type="project" value="InterPro"/>
</dbReference>
<dbReference type="Gene3D" id="3.30.1070.10">
    <property type="entry name" value="Cell division topological specificity factor MinE"/>
    <property type="match status" value="1"/>
</dbReference>
<dbReference type="HAMAP" id="MF_00262">
    <property type="entry name" value="MinE"/>
    <property type="match status" value="1"/>
</dbReference>
<dbReference type="InterPro" id="IPR005527">
    <property type="entry name" value="MinE"/>
</dbReference>
<dbReference type="InterPro" id="IPR036707">
    <property type="entry name" value="MinE_sf"/>
</dbReference>
<dbReference type="NCBIfam" id="TIGR01215">
    <property type="entry name" value="minE"/>
    <property type="match status" value="1"/>
</dbReference>
<dbReference type="Pfam" id="PF03776">
    <property type="entry name" value="MinE"/>
    <property type="match status" value="1"/>
</dbReference>
<dbReference type="SUPFAM" id="SSF55229">
    <property type="entry name" value="Cell division protein MinE topological specificity domain"/>
    <property type="match status" value="1"/>
</dbReference>
<keyword id="KW-0131">Cell cycle</keyword>
<keyword id="KW-0132">Cell division</keyword>
<keyword id="KW-1185">Reference proteome</keyword>
<accession>A7NPG2</accession>
<reference key="1">
    <citation type="submission" date="2007-08" db="EMBL/GenBank/DDBJ databases">
        <title>Complete sequence of Roseiflexus castenholzii DSM 13941.</title>
        <authorList>
            <consortium name="US DOE Joint Genome Institute"/>
            <person name="Copeland A."/>
            <person name="Lucas S."/>
            <person name="Lapidus A."/>
            <person name="Barry K."/>
            <person name="Glavina del Rio T."/>
            <person name="Dalin E."/>
            <person name="Tice H."/>
            <person name="Pitluck S."/>
            <person name="Thompson L.S."/>
            <person name="Brettin T."/>
            <person name="Bruce D."/>
            <person name="Detter J.C."/>
            <person name="Han C."/>
            <person name="Tapia R."/>
            <person name="Schmutz J."/>
            <person name="Larimer F."/>
            <person name="Land M."/>
            <person name="Hauser L."/>
            <person name="Kyrpides N."/>
            <person name="Mikhailova N."/>
            <person name="Bryant D.A."/>
            <person name="Hanada S."/>
            <person name="Tsukatani Y."/>
            <person name="Richardson P."/>
        </authorList>
    </citation>
    <scope>NUCLEOTIDE SEQUENCE [LARGE SCALE GENOMIC DNA]</scope>
    <source>
        <strain>DSM 13941 / HLO8</strain>
    </source>
</reference>
<feature type="chain" id="PRO_1000078643" description="Cell division topological specificity factor">
    <location>
        <begin position="1"/>
        <end position="87"/>
    </location>
</feature>
<protein>
    <recommendedName>
        <fullName evidence="1">Cell division topological specificity factor</fullName>
    </recommendedName>
</protein>